<gene>
    <name evidence="1" type="primary">glmM</name>
    <name type="ordered locus">Maqu_3353</name>
</gene>
<sequence>MTQRKYFGTDGIRGRVGDSPITPEFMLHLGWAAGQAFKRAGQRNSVLIGKDTRLSGYMFESALEAGLAAAGVDVKLLGPMPTPAIAYLTRTFRASAGIVISASHNPHHDNGIKFFSSAGTKLDDALEAEIERWLDQPIEVCEPEELGKASRVDDAPGRYVEFCKSTVPNEFTLDGMHLVLDCAHGATYHVAPKVFRELGAKVTVIGAEPDGLNINLNVGSTHLGALKQAVAEKKADLGIAFDGDGDRVLMVDRDGSEVDGDELLYILASQRQAEGRLNGGVVGTLMTNLGVELALREIGVEFERAKVGDRYVMERLLANNWLIGGEGSGHMVIRDCTTTGDGIVSALQVLLAVRKSGKTMGELRAGMSKLPQKMINVRVAERFDPLGRADIVEAMARAEASLGDAGRILLRASGTEPLIRVMAEGQSADDITRVVEELALVVERSTP</sequence>
<dbReference type="EC" id="5.4.2.10" evidence="1"/>
<dbReference type="EMBL" id="CP000514">
    <property type="protein sequence ID" value="ABM20424.1"/>
    <property type="molecule type" value="Genomic_DNA"/>
</dbReference>
<dbReference type="RefSeq" id="WP_011786765.1">
    <property type="nucleotide sequence ID" value="NC_008740.1"/>
</dbReference>
<dbReference type="SMR" id="A1U605"/>
<dbReference type="STRING" id="351348.Maqu_3353"/>
<dbReference type="KEGG" id="maq:Maqu_3353"/>
<dbReference type="eggNOG" id="COG1109">
    <property type="taxonomic scope" value="Bacteria"/>
</dbReference>
<dbReference type="HOGENOM" id="CLU_016950_7_0_6"/>
<dbReference type="OrthoDB" id="9803322at2"/>
<dbReference type="Proteomes" id="UP000000998">
    <property type="component" value="Chromosome"/>
</dbReference>
<dbReference type="GO" id="GO:0005829">
    <property type="term" value="C:cytosol"/>
    <property type="evidence" value="ECO:0007669"/>
    <property type="project" value="TreeGrafter"/>
</dbReference>
<dbReference type="GO" id="GO:0000287">
    <property type="term" value="F:magnesium ion binding"/>
    <property type="evidence" value="ECO:0007669"/>
    <property type="project" value="UniProtKB-UniRule"/>
</dbReference>
<dbReference type="GO" id="GO:0008966">
    <property type="term" value="F:phosphoglucosamine mutase activity"/>
    <property type="evidence" value="ECO:0007669"/>
    <property type="project" value="UniProtKB-UniRule"/>
</dbReference>
<dbReference type="GO" id="GO:0004615">
    <property type="term" value="F:phosphomannomutase activity"/>
    <property type="evidence" value="ECO:0007669"/>
    <property type="project" value="TreeGrafter"/>
</dbReference>
<dbReference type="GO" id="GO:0005975">
    <property type="term" value="P:carbohydrate metabolic process"/>
    <property type="evidence" value="ECO:0007669"/>
    <property type="project" value="InterPro"/>
</dbReference>
<dbReference type="GO" id="GO:0009252">
    <property type="term" value="P:peptidoglycan biosynthetic process"/>
    <property type="evidence" value="ECO:0007669"/>
    <property type="project" value="TreeGrafter"/>
</dbReference>
<dbReference type="GO" id="GO:0006048">
    <property type="term" value="P:UDP-N-acetylglucosamine biosynthetic process"/>
    <property type="evidence" value="ECO:0007669"/>
    <property type="project" value="TreeGrafter"/>
</dbReference>
<dbReference type="CDD" id="cd05802">
    <property type="entry name" value="GlmM"/>
    <property type="match status" value="1"/>
</dbReference>
<dbReference type="FunFam" id="3.30.310.50:FF:000001">
    <property type="entry name" value="Phosphoglucosamine mutase"/>
    <property type="match status" value="1"/>
</dbReference>
<dbReference type="FunFam" id="3.40.120.10:FF:000001">
    <property type="entry name" value="Phosphoglucosamine mutase"/>
    <property type="match status" value="1"/>
</dbReference>
<dbReference type="FunFam" id="3.40.120.10:FF:000003">
    <property type="entry name" value="Phosphoglucosamine mutase"/>
    <property type="match status" value="1"/>
</dbReference>
<dbReference type="Gene3D" id="3.40.120.10">
    <property type="entry name" value="Alpha-D-Glucose-1,6-Bisphosphate, subunit A, domain 3"/>
    <property type="match status" value="3"/>
</dbReference>
<dbReference type="Gene3D" id="3.30.310.50">
    <property type="entry name" value="Alpha-D-phosphohexomutase, C-terminal domain"/>
    <property type="match status" value="1"/>
</dbReference>
<dbReference type="HAMAP" id="MF_01554_B">
    <property type="entry name" value="GlmM_B"/>
    <property type="match status" value="1"/>
</dbReference>
<dbReference type="InterPro" id="IPR005844">
    <property type="entry name" value="A-D-PHexomutase_a/b/a-I"/>
</dbReference>
<dbReference type="InterPro" id="IPR016055">
    <property type="entry name" value="A-D-PHexomutase_a/b/a-I/II/III"/>
</dbReference>
<dbReference type="InterPro" id="IPR005845">
    <property type="entry name" value="A-D-PHexomutase_a/b/a-II"/>
</dbReference>
<dbReference type="InterPro" id="IPR005846">
    <property type="entry name" value="A-D-PHexomutase_a/b/a-III"/>
</dbReference>
<dbReference type="InterPro" id="IPR005843">
    <property type="entry name" value="A-D-PHexomutase_C"/>
</dbReference>
<dbReference type="InterPro" id="IPR036900">
    <property type="entry name" value="A-D-PHexomutase_C_sf"/>
</dbReference>
<dbReference type="InterPro" id="IPR016066">
    <property type="entry name" value="A-D-PHexomutase_CS"/>
</dbReference>
<dbReference type="InterPro" id="IPR005841">
    <property type="entry name" value="Alpha-D-phosphohexomutase_SF"/>
</dbReference>
<dbReference type="InterPro" id="IPR006352">
    <property type="entry name" value="GlmM_bact"/>
</dbReference>
<dbReference type="InterPro" id="IPR050060">
    <property type="entry name" value="Phosphoglucosamine_mutase"/>
</dbReference>
<dbReference type="NCBIfam" id="TIGR01455">
    <property type="entry name" value="glmM"/>
    <property type="match status" value="1"/>
</dbReference>
<dbReference type="NCBIfam" id="NF008139">
    <property type="entry name" value="PRK10887.1"/>
    <property type="match status" value="1"/>
</dbReference>
<dbReference type="PANTHER" id="PTHR42946:SF1">
    <property type="entry name" value="PHOSPHOGLUCOMUTASE (ALPHA-D-GLUCOSE-1,6-BISPHOSPHATE-DEPENDENT)"/>
    <property type="match status" value="1"/>
</dbReference>
<dbReference type="PANTHER" id="PTHR42946">
    <property type="entry name" value="PHOSPHOHEXOSE MUTASE"/>
    <property type="match status" value="1"/>
</dbReference>
<dbReference type="Pfam" id="PF02878">
    <property type="entry name" value="PGM_PMM_I"/>
    <property type="match status" value="1"/>
</dbReference>
<dbReference type="Pfam" id="PF02879">
    <property type="entry name" value="PGM_PMM_II"/>
    <property type="match status" value="1"/>
</dbReference>
<dbReference type="Pfam" id="PF02880">
    <property type="entry name" value="PGM_PMM_III"/>
    <property type="match status" value="1"/>
</dbReference>
<dbReference type="Pfam" id="PF00408">
    <property type="entry name" value="PGM_PMM_IV"/>
    <property type="match status" value="1"/>
</dbReference>
<dbReference type="PRINTS" id="PR00509">
    <property type="entry name" value="PGMPMM"/>
</dbReference>
<dbReference type="SUPFAM" id="SSF55957">
    <property type="entry name" value="Phosphoglucomutase, C-terminal domain"/>
    <property type="match status" value="1"/>
</dbReference>
<dbReference type="SUPFAM" id="SSF53738">
    <property type="entry name" value="Phosphoglucomutase, first 3 domains"/>
    <property type="match status" value="3"/>
</dbReference>
<dbReference type="PROSITE" id="PS00710">
    <property type="entry name" value="PGM_PMM"/>
    <property type="match status" value="1"/>
</dbReference>
<evidence type="ECO:0000255" key="1">
    <source>
        <dbReference type="HAMAP-Rule" id="MF_01554"/>
    </source>
</evidence>
<reference key="1">
    <citation type="journal article" date="2011" name="Appl. Environ. Microbiol.">
        <title>Genomic potential of Marinobacter aquaeolei, a biogeochemical 'opportunitroph'.</title>
        <authorList>
            <person name="Singer E."/>
            <person name="Webb E.A."/>
            <person name="Nelson W.C."/>
            <person name="Heidelberg J.F."/>
            <person name="Ivanova N."/>
            <person name="Pati A."/>
            <person name="Edwards K.J."/>
        </authorList>
    </citation>
    <scope>NUCLEOTIDE SEQUENCE [LARGE SCALE GENOMIC DNA]</scope>
    <source>
        <strain>ATCC 700491 / DSM 11845 / VT8</strain>
    </source>
</reference>
<name>GLMM_MARN8</name>
<organism>
    <name type="scientific">Marinobacter nauticus (strain ATCC 700491 / DSM 11845 / VT8)</name>
    <name type="common">Marinobacter aquaeolei</name>
    <dbReference type="NCBI Taxonomy" id="351348"/>
    <lineage>
        <taxon>Bacteria</taxon>
        <taxon>Pseudomonadati</taxon>
        <taxon>Pseudomonadota</taxon>
        <taxon>Gammaproteobacteria</taxon>
        <taxon>Pseudomonadales</taxon>
        <taxon>Marinobacteraceae</taxon>
        <taxon>Marinobacter</taxon>
    </lineage>
</organism>
<feature type="chain" id="PRO_0000301336" description="Phosphoglucosamine mutase">
    <location>
        <begin position="1"/>
        <end position="447"/>
    </location>
</feature>
<feature type="active site" description="Phosphoserine intermediate" evidence="1">
    <location>
        <position position="103"/>
    </location>
</feature>
<feature type="binding site" description="via phosphate group" evidence="1">
    <location>
        <position position="103"/>
    </location>
    <ligand>
        <name>Mg(2+)</name>
        <dbReference type="ChEBI" id="CHEBI:18420"/>
    </ligand>
</feature>
<feature type="binding site" evidence="1">
    <location>
        <position position="242"/>
    </location>
    <ligand>
        <name>Mg(2+)</name>
        <dbReference type="ChEBI" id="CHEBI:18420"/>
    </ligand>
</feature>
<feature type="binding site" evidence="1">
    <location>
        <position position="244"/>
    </location>
    <ligand>
        <name>Mg(2+)</name>
        <dbReference type="ChEBI" id="CHEBI:18420"/>
    </ligand>
</feature>
<feature type="binding site" evidence="1">
    <location>
        <position position="246"/>
    </location>
    <ligand>
        <name>Mg(2+)</name>
        <dbReference type="ChEBI" id="CHEBI:18420"/>
    </ligand>
</feature>
<feature type="modified residue" description="Phosphoserine" evidence="1">
    <location>
        <position position="103"/>
    </location>
</feature>
<comment type="function">
    <text evidence="1">Catalyzes the conversion of glucosamine-6-phosphate to glucosamine-1-phosphate.</text>
</comment>
<comment type="catalytic activity">
    <reaction evidence="1">
        <text>alpha-D-glucosamine 1-phosphate = D-glucosamine 6-phosphate</text>
        <dbReference type="Rhea" id="RHEA:23424"/>
        <dbReference type="ChEBI" id="CHEBI:58516"/>
        <dbReference type="ChEBI" id="CHEBI:58725"/>
        <dbReference type="EC" id="5.4.2.10"/>
    </reaction>
</comment>
<comment type="cofactor">
    <cofactor evidence="1">
        <name>Mg(2+)</name>
        <dbReference type="ChEBI" id="CHEBI:18420"/>
    </cofactor>
    <text evidence="1">Binds 1 Mg(2+) ion per subunit.</text>
</comment>
<comment type="PTM">
    <text evidence="1">Activated by phosphorylation.</text>
</comment>
<comment type="similarity">
    <text evidence="1">Belongs to the phosphohexose mutase family.</text>
</comment>
<protein>
    <recommendedName>
        <fullName evidence="1">Phosphoglucosamine mutase</fullName>
        <ecNumber evidence="1">5.4.2.10</ecNumber>
    </recommendedName>
</protein>
<proteinExistence type="inferred from homology"/>
<accession>A1U605</accession>
<keyword id="KW-0413">Isomerase</keyword>
<keyword id="KW-0460">Magnesium</keyword>
<keyword id="KW-0479">Metal-binding</keyword>
<keyword id="KW-0597">Phosphoprotein</keyword>